<comment type="function">
    <text evidence="2">Plays a role in the regulation of the mitochondrial ribosome assembly and of translational activity (By similarity). Displays mitochondrial GTPase activity (By similarity).</text>
</comment>
<comment type="subunit">
    <text evidence="2">Associates with the mitochondrial ribosome large subunit; the association occurs in a GTP-dependent manner (By similarity).</text>
</comment>
<comment type="subcellular location">
    <subcellularLocation>
        <location evidence="2">Mitochondrion inner membrane</location>
        <topology evidence="2">Peripheral membrane protein</topology>
        <orientation evidence="2">Matrix side</orientation>
    </subcellularLocation>
</comment>
<comment type="similarity">
    <text evidence="4">Belongs to the TRAFAC class YlqF/YawG GTPase family. MTG1 subfamily.</text>
</comment>
<comment type="sequence caution" evidence="5">
    <conflict type="erroneous termination">
        <sequence resource="EMBL-CDS" id="AAH27306"/>
    </conflict>
    <text>Extended C-terminus.</text>
</comment>
<gene>
    <name type="primary">Mtg1</name>
    <name type="synonym">Gm169</name>
    <name type="synonym">Gtpbp7</name>
</gene>
<keyword id="KW-0342">GTP-binding</keyword>
<keyword id="KW-0472">Membrane</keyword>
<keyword id="KW-0496">Mitochondrion</keyword>
<keyword id="KW-0999">Mitochondrion inner membrane</keyword>
<keyword id="KW-0547">Nucleotide-binding</keyword>
<keyword id="KW-1185">Reference proteome</keyword>
<keyword id="KW-0809">Transit peptide</keyword>
<keyword id="KW-0810">Translation regulation</keyword>
<organism>
    <name type="scientific">Mus musculus</name>
    <name type="common">Mouse</name>
    <dbReference type="NCBI Taxonomy" id="10090"/>
    <lineage>
        <taxon>Eukaryota</taxon>
        <taxon>Metazoa</taxon>
        <taxon>Chordata</taxon>
        <taxon>Craniata</taxon>
        <taxon>Vertebrata</taxon>
        <taxon>Euteleostomi</taxon>
        <taxon>Mammalia</taxon>
        <taxon>Eutheria</taxon>
        <taxon>Euarchontoglires</taxon>
        <taxon>Glires</taxon>
        <taxon>Rodentia</taxon>
        <taxon>Myomorpha</taxon>
        <taxon>Muroidea</taxon>
        <taxon>Muridae</taxon>
        <taxon>Murinae</taxon>
        <taxon>Mus</taxon>
        <taxon>Mus</taxon>
    </lineage>
</organism>
<reference key="1">
    <citation type="journal article" date="2005" name="Science">
        <title>The transcriptional landscape of the mammalian genome.</title>
        <authorList>
            <person name="Carninci P."/>
            <person name="Kasukawa T."/>
            <person name="Katayama S."/>
            <person name="Gough J."/>
            <person name="Frith M.C."/>
            <person name="Maeda N."/>
            <person name="Oyama R."/>
            <person name="Ravasi T."/>
            <person name="Lenhard B."/>
            <person name="Wells C."/>
            <person name="Kodzius R."/>
            <person name="Shimokawa K."/>
            <person name="Bajic V.B."/>
            <person name="Brenner S.E."/>
            <person name="Batalov S."/>
            <person name="Forrest A.R."/>
            <person name="Zavolan M."/>
            <person name="Davis M.J."/>
            <person name="Wilming L.G."/>
            <person name="Aidinis V."/>
            <person name="Allen J.E."/>
            <person name="Ambesi-Impiombato A."/>
            <person name="Apweiler R."/>
            <person name="Aturaliya R.N."/>
            <person name="Bailey T.L."/>
            <person name="Bansal M."/>
            <person name="Baxter L."/>
            <person name="Beisel K.W."/>
            <person name="Bersano T."/>
            <person name="Bono H."/>
            <person name="Chalk A.M."/>
            <person name="Chiu K.P."/>
            <person name="Choudhary V."/>
            <person name="Christoffels A."/>
            <person name="Clutterbuck D.R."/>
            <person name="Crowe M.L."/>
            <person name="Dalla E."/>
            <person name="Dalrymple B.P."/>
            <person name="de Bono B."/>
            <person name="Della Gatta G."/>
            <person name="di Bernardo D."/>
            <person name="Down T."/>
            <person name="Engstrom P."/>
            <person name="Fagiolini M."/>
            <person name="Faulkner G."/>
            <person name="Fletcher C.F."/>
            <person name="Fukushima T."/>
            <person name="Furuno M."/>
            <person name="Futaki S."/>
            <person name="Gariboldi M."/>
            <person name="Georgii-Hemming P."/>
            <person name="Gingeras T.R."/>
            <person name="Gojobori T."/>
            <person name="Green R.E."/>
            <person name="Gustincich S."/>
            <person name="Harbers M."/>
            <person name="Hayashi Y."/>
            <person name="Hensch T.K."/>
            <person name="Hirokawa N."/>
            <person name="Hill D."/>
            <person name="Huminiecki L."/>
            <person name="Iacono M."/>
            <person name="Ikeo K."/>
            <person name="Iwama A."/>
            <person name="Ishikawa T."/>
            <person name="Jakt M."/>
            <person name="Kanapin A."/>
            <person name="Katoh M."/>
            <person name="Kawasawa Y."/>
            <person name="Kelso J."/>
            <person name="Kitamura H."/>
            <person name="Kitano H."/>
            <person name="Kollias G."/>
            <person name="Krishnan S.P."/>
            <person name="Kruger A."/>
            <person name="Kummerfeld S.K."/>
            <person name="Kurochkin I.V."/>
            <person name="Lareau L.F."/>
            <person name="Lazarevic D."/>
            <person name="Lipovich L."/>
            <person name="Liu J."/>
            <person name="Liuni S."/>
            <person name="McWilliam S."/>
            <person name="Madan Babu M."/>
            <person name="Madera M."/>
            <person name="Marchionni L."/>
            <person name="Matsuda H."/>
            <person name="Matsuzawa S."/>
            <person name="Miki H."/>
            <person name="Mignone F."/>
            <person name="Miyake S."/>
            <person name="Morris K."/>
            <person name="Mottagui-Tabar S."/>
            <person name="Mulder N."/>
            <person name="Nakano N."/>
            <person name="Nakauchi H."/>
            <person name="Ng P."/>
            <person name="Nilsson R."/>
            <person name="Nishiguchi S."/>
            <person name="Nishikawa S."/>
            <person name="Nori F."/>
            <person name="Ohara O."/>
            <person name="Okazaki Y."/>
            <person name="Orlando V."/>
            <person name="Pang K.C."/>
            <person name="Pavan W.J."/>
            <person name="Pavesi G."/>
            <person name="Pesole G."/>
            <person name="Petrovsky N."/>
            <person name="Piazza S."/>
            <person name="Reed J."/>
            <person name="Reid J.F."/>
            <person name="Ring B.Z."/>
            <person name="Ringwald M."/>
            <person name="Rost B."/>
            <person name="Ruan Y."/>
            <person name="Salzberg S.L."/>
            <person name="Sandelin A."/>
            <person name="Schneider C."/>
            <person name="Schoenbach C."/>
            <person name="Sekiguchi K."/>
            <person name="Semple C.A."/>
            <person name="Seno S."/>
            <person name="Sessa L."/>
            <person name="Sheng Y."/>
            <person name="Shibata Y."/>
            <person name="Shimada H."/>
            <person name="Shimada K."/>
            <person name="Silva D."/>
            <person name="Sinclair B."/>
            <person name="Sperling S."/>
            <person name="Stupka E."/>
            <person name="Sugiura K."/>
            <person name="Sultana R."/>
            <person name="Takenaka Y."/>
            <person name="Taki K."/>
            <person name="Tammoja K."/>
            <person name="Tan S.L."/>
            <person name="Tang S."/>
            <person name="Taylor M.S."/>
            <person name="Tegner J."/>
            <person name="Teichmann S.A."/>
            <person name="Ueda H.R."/>
            <person name="van Nimwegen E."/>
            <person name="Verardo R."/>
            <person name="Wei C.L."/>
            <person name="Yagi K."/>
            <person name="Yamanishi H."/>
            <person name="Zabarovsky E."/>
            <person name="Zhu S."/>
            <person name="Zimmer A."/>
            <person name="Hide W."/>
            <person name="Bult C."/>
            <person name="Grimmond S.M."/>
            <person name="Teasdale R.D."/>
            <person name="Liu E.T."/>
            <person name="Brusic V."/>
            <person name="Quackenbush J."/>
            <person name="Wahlestedt C."/>
            <person name="Mattick J.S."/>
            <person name="Hume D.A."/>
            <person name="Kai C."/>
            <person name="Sasaki D."/>
            <person name="Tomaru Y."/>
            <person name="Fukuda S."/>
            <person name="Kanamori-Katayama M."/>
            <person name="Suzuki M."/>
            <person name="Aoki J."/>
            <person name="Arakawa T."/>
            <person name="Iida J."/>
            <person name="Imamura K."/>
            <person name="Itoh M."/>
            <person name="Kato T."/>
            <person name="Kawaji H."/>
            <person name="Kawagashira N."/>
            <person name="Kawashima T."/>
            <person name="Kojima M."/>
            <person name="Kondo S."/>
            <person name="Konno H."/>
            <person name="Nakano K."/>
            <person name="Ninomiya N."/>
            <person name="Nishio T."/>
            <person name="Okada M."/>
            <person name="Plessy C."/>
            <person name="Shibata K."/>
            <person name="Shiraki T."/>
            <person name="Suzuki S."/>
            <person name="Tagami M."/>
            <person name="Waki K."/>
            <person name="Watahiki A."/>
            <person name="Okamura-Oho Y."/>
            <person name="Suzuki H."/>
            <person name="Kawai J."/>
            <person name="Hayashizaki Y."/>
        </authorList>
    </citation>
    <scope>NUCLEOTIDE SEQUENCE [LARGE SCALE MRNA]</scope>
    <source>
        <strain>C57BL/6J</strain>
        <tissue>Brain</tissue>
        <tissue>Lung</tissue>
    </source>
</reference>
<reference key="2">
    <citation type="journal article" date="2004" name="Genome Res.">
        <title>The status, quality, and expansion of the NIH full-length cDNA project: the Mammalian Gene Collection (MGC).</title>
        <authorList>
            <consortium name="The MGC Project Team"/>
        </authorList>
    </citation>
    <scope>NUCLEOTIDE SEQUENCE [LARGE SCALE MRNA]</scope>
    <source>
        <strain>Czech II</strain>
        <tissue>Mammary tumor</tissue>
    </source>
</reference>
<reference key="3">
    <citation type="journal article" date="2010" name="Cell">
        <title>A tissue-specific atlas of mouse protein phosphorylation and expression.</title>
        <authorList>
            <person name="Huttlin E.L."/>
            <person name="Jedrychowski M.P."/>
            <person name="Elias J.E."/>
            <person name="Goswami T."/>
            <person name="Rad R."/>
            <person name="Beausoleil S.A."/>
            <person name="Villen J."/>
            <person name="Haas W."/>
            <person name="Sowa M.E."/>
            <person name="Gygi S.P."/>
        </authorList>
    </citation>
    <scope>IDENTIFICATION BY MASS SPECTROMETRY [LARGE SCALE ANALYSIS]</scope>
    <source>
        <tissue>Heart</tissue>
    </source>
</reference>
<proteinExistence type="evidence at protein level"/>
<evidence type="ECO:0000250" key="1"/>
<evidence type="ECO:0000250" key="2">
    <source>
        <dbReference type="UniProtKB" id="Q9BT17"/>
    </source>
</evidence>
<evidence type="ECO:0000255" key="3"/>
<evidence type="ECO:0000255" key="4">
    <source>
        <dbReference type="PROSITE-ProRule" id="PRU01058"/>
    </source>
</evidence>
<evidence type="ECO:0000305" key="5"/>
<name>MTG1_MOUSE</name>
<sequence>MRLWPQAWGAVRGAWRECFPLQGHDVARWFPGHMAKGLKKMQSSLKSVDCVIEVHDARIPFSGRNPLFQELLGLKPHLLVLNKMDLADLTEQQKIVQRLEEKGLSNVLFTNCVKDENIKQIVPKVMELIRCSYRYHRAETPEYCIMVVGVPNVGKSSLINSLRRQHLRTGKAARVGGEPGITRAVTSRIQVCERPLVFLLDTPGVLAPRIESVETGLKLALCGTVLDHLVGEETMADYLLYTLNRHGLFGYVQHYALASACDQIEWVLKNVAIKLRKTRKVKVLTGTGNVNVIQPDYAMAARDFLRTFRSGLLGQVMLDRDIIPAC</sequence>
<dbReference type="EMBL" id="AK144453">
    <property type="protein sequence ID" value="BAE25897.1"/>
    <property type="molecule type" value="mRNA"/>
</dbReference>
<dbReference type="EMBL" id="AK144625">
    <property type="protein sequence ID" value="BAE25976.1"/>
    <property type="molecule type" value="mRNA"/>
</dbReference>
<dbReference type="EMBL" id="BC027306">
    <property type="protein sequence ID" value="AAH27306.1"/>
    <property type="status" value="ALT_SEQ"/>
    <property type="molecule type" value="mRNA"/>
</dbReference>
<dbReference type="CCDS" id="CCDS52432.1"/>
<dbReference type="RefSeq" id="NP_955005.2">
    <property type="nucleotide sequence ID" value="NM_199301.2"/>
</dbReference>
<dbReference type="SMR" id="Q8R2R6"/>
<dbReference type="BioGRID" id="229331">
    <property type="interactions" value="2"/>
</dbReference>
<dbReference type="FunCoup" id="Q8R2R6">
    <property type="interactions" value="2322"/>
</dbReference>
<dbReference type="STRING" id="10090.ENSMUSP00000036491"/>
<dbReference type="iPTMnet" id="Q8R2R6"/>
<dbReference type="PhosphoSitePlus" id="Q8R2R6"/>
<dbReference type="SwissPalm" id="Q8R2R6"/>
<dbReference type="PaxDb" id="10090-ENSMUSP00000036491"/>
<dbReference type="PeptideAtlas" id="Q8R2R6"/>
<dbReference type="ProteomicsDB" id="290214"/>
<dbReference type="Pumba" id="Q8R2R6"/>
<dbReference type="Antibodypedia" id="32682">
    <property type="antibodies" value="107 antibodies from 20 providers"/>
</dbReference>
<dbReference type="DNASU" id="212508"/>
<dbReference type="Ensembl" id="ENSMUST00000036977.9">
    <property type="protein sequence ID" value="ENSMUSP00000036491.9"/>
    <property type="gene ID" value="ENSMUSG00000039018.16"/>
</dbReference>
<dbReference type="GeneID" id="212508"/>
<dbReference type="KEGG" id="mmu:212508"/>
<dbReference type="UCSC" id="uc009khd.2">
    <property type="organism name" value="mouse"/>
</dbReference>
<dbReference type="AGR" id="MGI:2685015"/>
<dbReference type="CTD" id="92170"/>
<dbReference type="MGI" id="MGI:2685015">
    <property type="gene designation" value="Mtg1"/>
</dbReference>
<dbReference type="VEuPathDB" id="HostDB:ENSMUSG00000039018"/>
<dbReference type="eggNOG" id="KOG2485">
    <property type="taxonomic scope" value="Eukaryota"/>
</dbReference>
<dbReference type="GeneTree" id="ENSGT00500000044923"/>
<dbReference type="HOGENOM" id="CLU_011106_0_2_1"/>
<dbReference type="InParanoid" id="Q8R2R6"/>
<dbReference type="OMA" id="GVLWPKF"/>
<dbReference type="OrthoDB" id="269151at2759"/>
<dbReference type="PhylomeDB" id="Q8R2R6"/>
<dbReference type="TreeFam" id="TF314530"/>
<dbReference type="BioGRID-ORCS" id="212508">
    <property type="hits" value="20 hits in 79 CRISPR screens"/>
</dbReference>
<dbReference type="PRO" id="PR:Q8R2R6"/>
<dbReference type="Proteomes" id="UP000000589">
    <property type="component" value="Chromosome 7"/>
</dbReference>
<dbReference type="RNAct" id="Q8R2R6">
    <property type="molecule type" value="protein"/>
</dbReference>
<dbReference type="Bgee" id="ENSMUSG00000039018">
    <property type="expression patterns" value="Expressed in interventricular septum and 252 other cell types or tissues"/>
</dbReference>
<dbReference type="ExpressionAtlas" id="Q8R2R6">
    <property type="expression patterns" value="baseline and differential"/>
</dbReference>
<dbReference type="GO" id="GO:0005743">
    <property type="term" value="C:mitochondrial inner membrane"/>
    <property type="evidence" value="ECO:0000250"/>
    <property type="project" value="UniProtKB"/>
</dbReference>
<dbReference type="GO" id="GO:0005759">
    <property type="term" value="C:mitochondrial matrix"/>
    <property type="evidence" value="ECO:0000250"/>
    <property type="project" value="UniProtKB"/>
</dbReference>
<dbReference type="GO" id="GO:0005761">
    <property type="term" value="C:mitochondrial ribosome"/>
    <property type="evidence" value="ECO:0000250"/>
    <property type="project" value="UniProtKB"/>
</dbReference>
<dbReference type="GO" id="GO:0005739">
    <property type="term" value="C:mitochondrion"/>
    <property type="evidence" value="ECO:0007005"/>
    <property type="project" value="MGI"/>
</dbReference>
<dbReference type="GO" id="GO:0005654">
    <property type="term" value="C:nucleoplasm"/>
    <property type="evidence" value="ECO:0007669"/>
    <property type="project" value="Ensembl"/>
</dbReference>
<dbReference type="GO" id="GO:0005525">
    <property type="term" value="F:GTP binding"/>
    <property type="evidence" value="ECO:0007669"/>
    <property type="project" value="UniProtKB-KW"/>
</dbReference>
<dbReference type="GO" id="GO:0003924">
    <property type="term" value="F:GTPase activity"/>
    <property type="evidence" value="ECO:0000250"/>
    <property type="project" value="UniProtKB"/>
</dbReference>
<dbReference type="GO" id="GO:1902775">
    <property type="term" value="P:mitochondrial large ribosomal subunit assembly"/>
    <property type="evidence" value="ECO:0007669"/>
    <property type="project" value="Ensembl"/>
</dbReference>
<dbReference type="GO" id="GO:0070129">
    <property type="term" value="P:regulation of mitochondrial translation"/>
    <property type="evidence" value="ECO:0000250"/>
    <property type="project" value="UniProtKB"/>
</dbReference>
<dbReference type="GO" id="GO:0044065">
    <property type="term" value="P:regulation of respiratory system process"/>
    <property type="evidence" value="ECO:0000250"/>
    <property type="project" value="UniProtKB"/>
</dbReference>
<dbReference type="CDD" id="cd01856">
    <property type="entry name" value="YlqF"/>
    <property type="match status" value="1"/>
</dbReference>
<dbReference type="FunFam" id="1.10.1580.10:FF:000004">
    <property type="entry name" value="Mitochondrial GTPase 1"/>
    <property type="match status" value="1"/>
</dbReference>
<dbReference type="FunFam" id="3.40.50.300:FF:000876">
    <property type="entry name" value="Mitochondrial GTPase 1"/>
    <property type="match status" value="1"/>
</dbReference>
<dbReference type="Gene3D" id="1.10.1580.10">
    <property type="match status" value="1"/>
</dbReference>
<dbReference type="Gene3D" id="3.40.50.300">
    <property type="entry name" value="P-loop containing nucleotide triphosphate hydrolases"/>
    <property type="match status" value="1"/>
</dbReference>
<dbReference type="InterPro" id="IPR030378">
    <property type="entry name" value="G_CP_dom"/>
</dbReference>
<dbReference type="InterPro" id="IPR006073">
    <property type="entry name" value="GTP-bd"/>
</dbReference>
<dbReference type="InterPro" id="IPR023179">
    <property type="entry name" value="GTP-bd_ortho_bundle_sf"/>
</dbReference>
<dbReference type="InterPro" id="IPR016478">
    <property type="entry name" value="GTPase_MTG1"/>
</dbReference>
<dbReference type="InterPro" id="IPR027417">
    <property type="entry name" value="P-loop_NTPase"/>
</dbReference>
<dbReference type="PANTHER" id="PTHR45782">
    <property type="entry name" value="MITOCHONDRIAL RIBOSOME-ASSOCIATED GTPASE 1"/>
    <property type="match status" value="1"/>
</dbReference>
<dbReference type="PANTHER" id="PTHR45782:SF4">
    <property type="entry name" value="MITOCHONDRIAL RIBOSOME-ASSOCIATED GTPASE 1"/>
    <property type="match status" value="1"/>
</dbReference>
<dbReference type="Pfam" id="PF01926">
    <property type="entry name" value="MMR_HSR1"/>
    <property type="match status" value="1"/>
</dbReference>
<dbReference type="PIRSF" id="PIRSF006230">
    <property type="entry name" value="MG442"/>
    <property type="match status" value="1"/>
</dbReference>
<dbReference type="PRINTS" id="PR00326">
    <property type="entry name" value="GTP1OBG"/>
</dbReference>
<dbReference type="SUPFAM" id="SSF52540">
    <property type="entry name" value="P-loop containing nucleoside triphosphate hydrolases"/>
    <property type="match status" value="1"/>
</dbReference>
<dbReference type="PROSITE" id="PS51721">
    <property type="entry name" value="G_CP"/>
    <property type="match status" value="1"/>
</dbReference>
<accession>Q8R2R6</accession>
<accession>Q3UMX2</accession>
<accession>Q3UN50</accession>
<protein>
    <recommendedName>
        <fullName>Mitochondrial ribosome-associated GTPase 1</fullName>
    </recommendedName>
    <alternativeName>
        <fullName>GTP-binding protein 7</fullName>
    </alternativeName>
    <alternativeName>
        <fullName>Mitochondrial GTPase 1</fullName>
    </alternativeName>
</protein>
<feature type="transit peptide" description="Mitochondrion" evidence="3">
    <location>
        <begin position="1"/>
        <end status="unknown"/>
    </location>
</feature>
<feature type="chain" id="PRO_0000280263" description="Mitochondrial ribosome-associated GTPase 1">
    <location>
        <begin status="unknown"/>
        <end position="326"/>
    </location>
</feature>
<feature type="domain" description="CP-type G" evidence="4">
    <location>
        <begin position="35"/>
        <end position="208"/>
    </location>
</feature>
<feature type="binding site" evidence="1">
    <location>
        <begin position="82"/>
        <end position="85"/>
    </location>
    <ligand>
        <name>GTP</name>
        <dbReference type="ChEBI" id="CHEBI:37565"/>
    </ligand>
</feature>
<feature type="binding site" evidence="1">
    <location>
        <begin position="152"/>
        <end position="157"/>
    </location>
    <ligand>
        <name>GTP</name>
        <dbReference type="ChEBI" id="CHEBI:37565"/>
    </ligand>
</feature>
<feature type="binding site" evidence="1">
    <location>
        <position position="204"/>
    </location>
    <ligand>
        <name>GTP</name>
        <dbReference type="ChEBI" id="CHEBI:37565"/>
    </ligand>
</feature>
<feature type="sequence conflict" description="In Ref. 1; BAE25976." evidence="5" ref="1">
    <original>P</original>
    <variation>L</variation>
    <location>
        <position position="5"/>
    </location>
</feature>
<feature type="sequence conflict" description="In Ref. 2; AAH27306." evidence="5" ref="2">
    <original>V</original>
    <variation>M</variation>
    <location>
        <position position="316"/>
    </location>
</feature>
<feature type="sequence conflict" description="In Ref. 1; BAE25976." evidence="5" ref="1">
    <original>M</original>
    <variation>L</variation>
    <location>
        <position position="317"/>
    </location>
</feature>